<evidence type="ECO:0000255" key="1">
    <source>
        <dbReference type="HAMAP-Rule" id="MF_00003"/>
    </source>
</evidence>
<evidence type="ECO:0000256" key="2">
    <source>
        <dbReference type="SAM" id="MobiDB-lite"/>
    </source>
</evidence>
<sequence>MNPIRMKKLESEIIRQISTAILEGKVKDPRVFLPSFHRIEISEDLKYAKVYFTALCNNNERKKLTQGLVSCAGFLSSFVGKNLRLHTNPKFTFVWDNSYIKSLEVNRLIDDSAPKTLFEELHPNPEEDDGDTDAETLLEDSESGIERET</sequence>
<accession>B0SQH5</accession>
<comment type="function">
    <text evidence="1">One of several proteins that assist in the late maturation steps of the functional core of the 30S ribosomal subunit. Associates with free 30S ribosomal subunits (but not with 30S subunits that are part of 70S ribosomes or polysomes). Required for efficient processing of 16S rRNA. May interact with the 5'-terminal helix region of 16S rRNA.</text>
</comment>
<comment type="subunit">
    <text evidence="1">Monomer. Binds 30S ribosomal subunits, but not 50S ribosomal subunits or 70S ribosomes.</text>
</comment>
<comment type="subcellular location">
    <subcellularLocation>
        <location evidence="1">Cytoplasm</location>
    </subcellularLocation>
</comment>
<comment type="similarity">
    <text evidence="1">Belongs to the RbfA family.</text>
</comment>
<gene>
    <name evidence="1" type="primary">rbfA</name>
    <name type="ordered locus">LEPBI_I1526</name>
</gene>
<name>RBFA_LEPBP</name>
<proteinExistence type="inferred from homology"/>
<dbReference type="EMBL" id="CP000786">
    <property type="protein sequence ID" value="ABZ97633.1"/>
    <property type="molecule type" value="Genomic_DNA"/>
</dbReference>
<dbReference type="RefSeq" id="WP_012388512.1">
    <property type="nucleotide sequence ID" value="NC_010602.1"/>
</dbReference>
<dbReference type="SMR" id="B0SQH5"/>
<dbReference type="STRING" id="456481.LEPBI_I1526"/>
<dbReference type="KEGG" id="lbi:LEPBI_I1526"/>
<dbReference type="HOGENOM" id="CLU_089475_5_0_12"/>
<dbReference type="OrthoDB" id="370444at2"/>
<dbReference type="BioCyc" id="LBIF456481:LEPBI_RS07510-MONOMER"/>
<dbReference type="Proteomes" id="UP000001847">
    <property type="component" value="Chromosome I"/>
</dbReference>
<dbReference type="GO" id="GO:0005829">
    <property type="term" value="C:cytosol"/>
    <property type="evidence" value="ECO:0007669"/>
    <property type="project" value="TreeGrafter"/>
</dbReference>
<dbReference type="GO" id="GO:0043024">
    <property type="term" value="F:ribosomal small subunit binding"/>
    <property type="evidence" value="ECO:0007669"/>
    <property type="project" value="TreeGrafter"/>
</dbReference>
<dbReference type="GO" id="GO:0030490">
    <property type="term" value="P:maturation of SSU-rRNA"/>
    <property type="evidence" value="ECO:0007669"/>
    <property type="project" value="UniProtKB-UniRule"/>
</dbReference>
<dbReference type="Gene3D" id="3.30.300.20">
    <property type="match status" value="1"/>
</dbReference>
<dbReference type="HAMAP" id="MF_00003">
    <property type="entry name" value="RbfA"/>
    <property type="match status" value="1"/>
</dbReference>
<dbReference type="InterPro" id="IPR015946">
    <property type="entry name" value="KH_dom-like_a/b"/>
</dbReference>
<dbReference type="InterPro" id="IPR000238">
    <property type="entry name" value="RbfA"/>
</dbReference>
<dbReference type="InterPro" id="IPR023799">
    <property type="entry name" value="RbfA_dom_sf"/>
</dbReference>
<dbReference type="NCBIfam" id="TIGR00082">
    <property type="entry name" value="rbfA"/>
    <property type="match status" value="1"/>
</dbReference>
<dbReference type="PANTHER" id="PTHR33515">
    <property type="entry name" value="RIBOSOME-BINDING FACTOR A, CHLOROPLASTIC-RELATED"/>
    <property type="match status" value="1"/>
</dbReference>
<dbReference type="PANTHER" id="PTHR33515:SF1">
    <property type="entry name" value="RIBOSOME-BINDING FACTOR A, CHLOROPLASTIC-RELATED"/>
    <property type="match status" value="1"/>
</dbReference>
<dbReference type="Pfam" id="PF02033">
    <property type="entry name" value="RBFA"/>
    <property type="match status" value="1"/>
</dbReference>
<dbReference type="SUPFAM" id="SSF89919">
    <property type="entry name" value="Ribosome-binding factor A, RbfA"/>
    <property type="match status" value="1"/>
</dbReference>
<keyword id="KW-0963">Cytoplasm</keyword>
<keyword id="KW-1185">Reference proteome</keyword>
<keyword id="KW-0690">Ribosome biogenesis</keyword>
<protein>
    <recommendedName>
        <fullName evidence="1">Ribosome-binding factor A</fullName>
    </recommendedName>
</protein>
<feature type="chain" id="PRO_1000088902" description="Ribosome-binding factor A">
    <location>
        <begin position="1"/>
        <end position="149"/>
    </location>
</feature>
<feature type="region of interest" description="Disordered" evidence="2">
    <location>
        <begin position="116"/>
        <end position="149"/>
    </location>
</feature>
<feature type="compositionally biased region" description="Basic and acidic residues" evidence="2">
    <location>
        <begin position="116"/>
        <end position="125"/>
    </location>
</feature>
<feature type="compositionally biased region" description="Acidic residues" evidence="2">
    <location>
        <begin position="126"/>
        <end position="143"/>
    </location>
</feature>
<organism>
    <name type="scientific">Leptospira biflexa serovar Patoc (strain Patoc 1 / ATCC 23582 / Paris)</name>
    <dbReference type="NCBI Taxonomy" id="456481"/>
    <lineage>
        <taxon>Bacteria</taxon>
        <taxon>Pseudomonadati</taxon>
        <taxon>Spirochaetota</taxon>
        <taxon>Spirochaetia</taxon>
        <taxon>Leptospirales</taxon>
        <taxon>Leptospiraceae</taxon>
        <taxon>Leptospira</taxon>
    </lineage>
</organism>
<reference key="1">
    <citation type="journal article" date="2008" name="PLoS ONE">
        <title>Genome sequence of the saprophyte Leptospira biflexa provides insights into the evolution of Leptospira and the pathogenesis of leptospirosis.</title>
        <authorList>
            <person name="Picardeau M."/>
            <person name="Bulach D.M."/>
            <person name="Bouchier C."/>
            <person name="Zuerner R.L."/>
            <person name="Zidane N."/>
            <person name="Wilson P.J."/>
            <person name="Creno S."/>
            <person name="Kuczek E.S."/>
            <person name="Bommezzadri S."/>
            <person name="Davis J.C."/>
            <person name="McGrath A."/>
            <person name="Johnson M.J."/>
            <person name="Boursaux-Eude C."/>
            <person name="Seemann T."/>
            <person name="Rouy Z."/>
            <person name="Coppel R.L."/>
            <person name="Rood J.I."/>
            <person name="Lajus A."/>
            <person name="Davies J.K."/>
            <person name="Medigue C."/>
            <person name="Adler B."/>
        </authorList>
    </citation>
    <scope>NUCLEOTIDE SEQUENCE [LARGE SCALE GENOMIC DNA]</scope>
    <source>
        <strain>Patoc 1 / ATCC 23582 / Paris</strain>
    </source>
</reference>